<keyword id="KW-0963">Cytoplasm</keyword>
<keyword id="KW-0251">Elongation factor</keyword>
<keyword id="KW-0342">GTP-binding</keyword>
<keyword id="KW-0378">Hydrolase</keyword>
<keyword id="KW-0460">Magnesium</keyword>
<keyword id="KW-0479">Metal-binding</keyword>
<keyword id="KW-0547">Nucleotide-binding</keyword>
<keyword id="KW-0648">Protein biosynthesis</keyword>
<keyword id="KW-1185">Reference proteome</keyword>
<accession>Q160Y4</accession>
<reference key="1">
    <citation type="journal article" date="2007" name="J. Bacteriol.">
        <title>The complete genome sequence of Roseobacter denitrificans reveals a mixotrophic rather than photosynthetic metabolism.</title>
        <authorList>
            <person name="Swingley W.D."/>
            <person name="Sadekar S."/>
            <person name="Mastrian S.D."/>
            <person name="Matthies H.J."/>
            <person name="Hao J."/>
            <person name="Ramos H."/>
            <person name="Acharya C.R."/>
            <person name="Conrad A.L."/>
            <person name="Taylor H.L."/>
            <person name="Dejesa L.C."/>
            <person name="Shah M.K."/>
            <person name="O'Huallachain M.E."/>
            <person name="Lince M.T."/>
            <person name="Blankenship R.E."/>
            <person name="Beatty J.T."/>
            <person name="Touchman J.W."/>
        </authorList>
    </citation>
    <scope>NUCLEOTIDE SEQUENCE [LARGE SCALE GENOMIC DNA]</scope>
    <source>
        <strain>ATCC 33942 / OCh 114</strain>
    </source>
</reference>
<evidence type="ECO:0000250" key="1"/>
<evidence type="ECO:0000255" key="2">
    <source>
        <dbReference type="HAMAP-Rule" id="MF_00118"/>
    </source>
</evidence>
<feature type="chain" id="PRO_0000337506" description="Elongation factor Tu">
    <location>
        <begin position="1"/>
        <end position="391"/>
    </location>
</feature>
<feature type="domain" description="tr-type G">
    <location>
        <begin position="10"/>
        <end position="201"/>
    </location>
</feature>
<feature type="region of interest" description="G1" evidence="1">
    <location>
        <begin position="19"/>
        <end position="26"/>
    </location>
</feature>
<feature type="region of interest" description="G2" evidence="1">
    <location>
        <begin position="55"/>
        <end position="59"/>
    </location>
</feature>
<feature type="region of interest" description="G3" evidence="1">
    <location>
        <begin position="76"/>
        <end position="79"/>
    </location>
</feature>
<feature type="region of interest" description="G4" evidence="1">
    <location>
        <begin position="131"/>
        <end position="134"/>
    </location>
</feature>
<feature type="region of interest" description="G5" evidence="1">
    <location>
        <begin position="169"/>
        <end position="171"/>
    </location>
</feature>
<feature type="binding site" evidence="2">
    <location>
        <begin position="19"/>
        <end position="26"/>
    </location>
    <ligand>
        <name>GTP</name>
        <dbReference type="ChEBI" id="CHEBI:37565"/>
    </ligand>
</feature>
<feature type="binding site" evidence="2">
    <location>
        <position position="26"/>
    </location>
    <ligand>
        <name>Mg(2+)</name>
        <dbReference type="ChEBI" id="CHEBI:18420"/>
    </ligand>
</feature>
<feature type="binding site" evidence="2">
    <location>
        <begin position="76"/>
        <end position="80"/>
    </location>
    <ligand>
        <name>GTP</name>
        <dbReference type="ChEBI" id="CHEBI:37565"/>
    </ligand>
</feature>
<feature type="binding site" evidence="2">
    <location>
        <begin position="131"/>
        <end position="134"/>
    </location>
    <ligand>
        <name>GTP</name>
        <dbReference type="ChEBI" id="CHEBI:37565"/>
    </ligand>
</feature>
<organism>
    <name type="scientific">Roseobacter denitrificans (strain ATCC 33942 / OCh 114)</name>
    <name type="common">Erythrobacter sp. (strain OCh 114)</name>
    <name type="synonym">Roseobacter denitrificans</name>
    <dbReference type="NCBI Taxonomy" id="375451"/>
    <lineage>
        <taxon>Bacteria</taxon>
        <taxon>Pseudomonadati</taxon>
        <taxon>Pseudomonadota</taxon>
        <taxon>Alphaproteobacteria</taxon>
        <taxon>Rhodobacterales</taxon>
        <taxon>Roseobacteraceae</taxon>
        <taxon>Roseobacter</taxon>
    </lineage>
</organism>
<comment type="function">
    <text evidence="2">GTP hydrolase that promotes the GTP-dependent binding of aminoacyl-tRNA to the A-site of ribosomes during protein biosynthesis.</text>
</comment>
<comment type="catalytic activity">
    <reaction evidence="2">
        <text>GTP + H2O = GDP + phosphate + H(+)</text>
        <dbReference type="Rhea" id="RHEA:19669"/>
        <dbReference type="ChEBI" id="CHEBI:15377"/>
        <dbReference type="ChEBI" id="CHEBI:15378"/>
        <dbReference type="ChEBI" id="CHEBI:37565"/>
        <dbReference type="ChEBI" id="CHEBI:43474"/>
        <dbReference type="ChEBI" id="CHEBI:58189"/>
        <dbReference type="EC" id="3.6.5.3"/>
    </reaction>
    <physiologicalReaction direction="left-to-right" evidence="2">
        <dbReference type="Rhea" id="RHEA:19670"/>
    </physiologicalReaction>
</comment>
<comment type="subunit">
    <text evidence="2">Monomer.</text>
</comment>
<comment type="subcellular location">
    <subcellularLocation>
        <location evidence="2">Cytoplasm</location>
    </subcellularLocation>
</comment>
<comment type="similarity">
    <text evidence="2">Belongs to the TRAFAC class translation factor GTPase superfamily. Classic translation factor GTPase family. EF-Tu/EF-1A subfamily.</text>
</comment>
<proteinExistence type="inferred from homology"/>
<protein>
    <recommendedName>
        <fullName evidence="2">Elongation factor Tu</fullName>
        <shortName evidence="2">EF-Tu</shortName>
        <ecNumber evidence="2">3.6.5.3</ecNumber>
    </recommendedName>
</protein>
<gene>
    <name evidence="2" type="primary">tuf1</name>
    <name type="synonym">tufA</name>
    <name type="ordered locus">RD1_1396</name>
</gene>
<gene>
    <name evidence="2" type="primary">tuf2</name>
    <name type="synonym">tuf</name>
    <name type="ordered locus">RD1_4012</name>
</gene>
<sequence>MAKAKFERNKPHVNIGTIGHVDHGKTTLTAAITKYFGDFQAYDQIDGAPEEKARGITISTAHVEYETENRHYAHVDCPGHADYVKNMITGAAQMDGAILVVNAADGPMPQTREHILLGRQVGIPTMVVFMNKVDQVDDEELLELVEMEIRELLSSYDYPGDDIPVIPGSALAAMEGRDPEIGEEAIKKLMAAVDEFIPTPERAIDQPFLMPVEDVFSISGRGTVVTGRVERGVINVGDNIEIVGIKDTQSTTCTGVEMFRKLLDRGEAGDNIGALLRGIDREAVERGQVLCKPGSVKPHTKFEAEAYILTKDEGGRHTPFFANYRPQFYFRTTDVTGTVQLAEGTEMVMPGDNVSFGVELIAPIAMEQGLRFAIREGGRTVGAGVVSKITE</sequence>
<name>EFTU_ROSDO</name>
<dbReference type="EC" id="3.6.5.3" evidence="2"/>
<dbReference type="EMBL" id="CP000362">
    <property type="protein sequence ID" value="ABG31036.1"/>
    <property type="molecule type" value="Genomic_DNA"/>
</dbReference>
<dbReference type="EMBL" id="CP000362">
    <property type="protein sequence ID" value="ABG33459.1"/>
    <property type="molecule type" value="Genomic_DNA"/>
</dbReference>
<dbReference type="RefSeq" id="WP_011567656.1">
    <property type="nucleotide sequence ID" value="NC_008209.1"/>
</dbReference>
<dbReference type="SMR" id="Q160Y4"/>
<dbReference type="STRING" id="375451.RD1_1396"/>
<dbReference type="KEGG" id="rde:RD1_1396"/>
<dbReference type="KEGG" id="rde:RD1_4012"/>
<dbReference type="eggNOG" id="COG0050">
    <property type="taxonomic scope" value="Bacteria"/>
</dbReference>
<dbReference type="HOGENOM" id="CLU_007265_0_0_5"/>
<dbReference type="OrthoDB" id="9803139at2"/>
<dbReference type="Proteomes" id="UP000007029">
    <property type="component" value="Chromosome"/>
</dbReference>
<dbReference type="GO" id="GO:0005737">
    <property type="term" value="C:cytoplasm"/>
    <property type="evidence" value="ECO:0007669"/>
    <property type="project" value="UniProtKB-SubCell"/>
</dbReference>
<dbReference type="GO" id="GO:0005525">
    <property type="term" value="F:GTP binding"/>
    <property type="evidence" value="ECO:0007669"/>
    <property type="project" value="UniProtKB-UniRule"/>
</dbReference>
<dbReference type="GO" id="GO:0003924">
    <property type="term" value="F:GTPase activity"/>
    <property type="evidence" value="ECO:0007669"/>
    <property type="project" value="InterPro"/>
</dbReference>
<dbReference type="GO" id="GO:0097216">
    <property type="term" value="F:guanosine tetraphosphate binding"/>
    <property type="evidence" value="ECO:0007669"/>
    <property type="project" value="UniProtKB-ARBA"/>
</dbReference>
<dbReference type="GO" id="GO:0003746">
    <property type="term" value="F:translation elongation factor activity"/>
    <property type="evidence" value="ECO:0007669"/>
    <property type="project" value="UniProtKB-UniRule"/>
</dbReference>
<dbReference type="CDD" id="cd01884">
    <property type="entry name" value="EF_Tu"/>
    <property type="match status" value="1"/>
</dbReference>
<dbReference type="CDD" id="cd03697">
    <property type="entry name" value="EFTU_II"/>
    <property type="match status" value="1"/>
</dbReference>
<dbReference type="CDD" id="cd03707">
    <property type="entry name" value="EFTU_III"/>
    <property type="match status" value="1"/>
</dbReference>
<dbReference type="FunFam" id="2.40.30.10:FF:000001">
    <property type="entry name" value="Elongation factor Tu"/>
    <property type="match status" value="1"/>
</dbReference>
<dbReference type="FunFam" id="3.40.50.300:FF:000003">
    <property type="entry name" value="Elongation factor Tu"/>
    <property type="match status" value="1"/>
</dbReference>
<dbReference type="Gene3D" id="3.40.50.300">
    <property type="entry name" value="P-loop containing nucleotide triphosphate hydrolases"/>
    <property type="match status" value="1"/>
</dbReference>
<dbReference type="Gene3D" id="2.40.30.10">
    <property type="entry name" value="Translation factors"/>
    <property type="match status" value="2"/>
</dbReference>
<dbReference type="HAMAP" id="MF_00118_B">
    <property type="entry name" value="EF_Tu_B"/>
    <property type="match status" value="1"/>
</dbReference>
<dbReference type="InterPro" id="IPR041709">
    <property type="entry name" value="EF-Tu_GTP-bd"/>
</dbReference>
<dbReference type="InterPro" id="IPR050055">
    <property type="entry name" value="EF-Tu_GTPase"/>
</dbReference>
<dbReference type="InterPro" id="IPR004161">
    <property type="entry name" value="EFTu-like_2"/>
</dbReference>
<dbReference type="InterPro" id="IPR033720">
    <property type="entry name" value="EFTU_2"/>
</dbReference>
<dbReference type="InterPro" id="IPR031157">
    <property type="entry name" value="G_TR_CS"/>
</dbReference>
<dbReference type="InterPro" id="IPR027417">
    <property type="entry name" value="P-loop_NTPase"/>
</dbReference>
<dbReference type="InterPro" id="IPR005225">
    <property type="entry name" value="Small_GTP-bd"/>
</dbReference>
<dbReference type="InterPro" id="IPR000795">
    <property type="entry name" value="T_Tr_GTP-bd_dom"/>
</dbReference>
<dbReference type="InterPro" id="IPR009000">
    <property type="entry name" value="Transl_B-barrel_sf"/>
</dbReference>
<dbReference type="InterPro" id="IPR009001">
    <property type="entry name" value="Transl_elong_EF1A/Init_IF2_C"/>
</dbReference>
<dbReference type="InterPro" id="IPR004541">
    <property type="entry name" value="Transl_elong_EFTu/EF1A_bac/org"/>
</dbReference>
<dbReference type="InterPro" id="IPR004160">
    <property type="entry name" value="Transl_elong_EFTu/EF1A_C"/>
</dbReference>
<dbReference type="NCBIfam" id="TIGR00485">
    <property type="entry name" value="EF-Tu"/>
    <property type="match status" value="1"/>
</dbReference>
<dbReference type="NCBIfam" id="NF000766">
    <property type="entry name" value="PRK00049.1"/>
    <property type="match status" value="1"/>
</dbReference>
<dbReference type="NCBIfam" id="NF009372">
    <property type="entry name" value="PRK12735.1"/>
    <property type="match status" value="1"/>
</dbReference>
<dbReference type="NCBIfam" id="NF009373">
    <property type="entry name" value="PRK12736.1"/>
    <property type="match status" value="1"/>
</dbReference>
<dbReference type="NCBIfam" id="TIGR00231">
    <property type="entry name" value="small_GTP"/>
    <property type="match status" value="1"/>
</dbReference>
<dbReference type="PANTHER" id="PTHR43721:SF22">
    <property type="entry name" value="ELONGATION FACTOR TU, MITOCHONDRIAL"/>
    <property type="match status" value="1"/>
</dbReference>
<dbReference type="PANTHER" id="PTHR43721">
    <property type="entry name" value="ELONGATION FACTOR TU-RELATED"/>
    <property type="match status" value="1"/>
</dbReference>
<dbReference type="Pfam" id="PF00009">
    <property type="entry name" value="GTP_EFTU"/>
    <property type="match status" value="1"/>
</dbReference>
<dbReference type="Pfam" id="PF03144">
    <property type="entry name" value="GTP_EFTU_D2"/>
    <property type="match status" value="1"/>
</dbReference>
<dbReference type="Pfam" id="PF03143">
    <property type="entry name" value="GTP_EFTU_D3"/>
    <property type="match status" value="1"/>
</dbReference>
<dbReference type="PRINTS" id="PR00315">
    <property type="entry name" value="ELONGATNFCT"/>
</dbReference>
<dbReference type="SUPFAM" id="SSF50465">
    <property type="entry name" value="EF-Tu/eEF-1alpha/eIF2-gamma C-terminal domain"/>
    <property type="match status" value="1"/>
</dbReference>
<dbReference type="SUPFAM" id="SSF52540">
    <property type="entry name" value="P-loop containing nucleoside triphosphate hydrolases"/>
    <property type="match status" value="1"/>
</dbReference>
<dbReference type="SUPFAM" id="SSF50447">
    <property type="entry name" value="Translation proteins"/>
    <property type="match status" value="1"/>
</dbReference>
<dbReference type="PROSITE" id="PS00301">
    <property type="entry name" value="G_TR_1"/>
    <property type="match status" value="1"/>
</dbReference>
<dbReference type="PROSITE" id="PS51722">
    <property type="entry name" value="G_TR_2"/>
    <property type="match status" value="1"/>
</dbReference>